<gene>
    <name type="primary">TUR2</name>
</gene>
<keyword id="KW-0067">ATP-binding</keyword>
<keyword id="KW-1003">Cell membrane</keyword>
<keyword id="KW-0472">Membrane</keyword>
<keyword id="KW-0547">Nucleotide-binding</keyword>
<keyword id="KW-0611">Plant defense</keyword>
<keyword id="KW-0677">Repeat</keyword>
<keyword id="KW-0812">Transmembrane</keyword>
<keyword id="KW-1133">Transmembrane helix</keyword>
<keyword id="KW-0813">Transport</keyword>
<name>TUR2_SPIPO</name>
<accession>O24367</accession>
<organism>
    <name type="scientific">Spirodela polyrhiza</name>
    <name type="common">Giant duckweed</name>
    <name type="synonym">Lemna polyrhiza</name>
    <dbReference type="NCBI Taxonomy" id="29656"/>
    <lineage>
        <taxon>Eukaryota</taxon>
        <taxon>Viridiplantae</taxon>
        <taxon>Streptophyta</taxon>
        <taxon>Embryophyta</taxon>
        <taxon>Tracheophyta</taxon>
        <taxon>Spermatophyta</taxon>
        <taxon>Magnoliopsida</taxon>
        <taxon>Liliopsida</taxon>
        <taxon>Araceae</taxon>
        <taxon>Lemnoideae</taxon>
        <taxon>Spirodela</taxon>
    </lineage>
</organism>
<evidence type="ECO:0000250" key="1"/>
<evidence type="ECO:0000255" key="2"/>
<evidence type="ECO:0000255" key="3">
    <source>
        <dbReference type="PROSITE-ProRule" id="PRU00434"/>
    </source>
</evidence>
<evidence type="ECO:0000269" key="4">
    <source>
    </source>
</evidence>
<evidence type="ECO:0000269" key="5">
    <source>
    </source>
</evidence>
<evidence type="ECO:0000305" key="6"/>
<feature type="chain" id="PRO_0000234657" description="Pleiotropic drug resistance protein TUR2">
    <location>
        <begin position="1"/>
        <end position="1441"/>
    </location>
</feature>
<feature type="transmembrane region" description="Helical" evidence="2">
    <location>
        <begin position="526"/>
        <end position="546"/>
    </location>
</feature>
<feature type="transmembrane region" description="Helical" evidence="2">
    <location>
        <begin position="559"/>
        <end position="579"/>
    </location>
</feature>
<feature type="transmembrane region" description="Helical" evidence="2">
    <location>
        <begin position="614"/>
        <end position="634"/>
    </location>
</feature>
<feature type="transmembrane region" description="Helical" evidence="2">
    <location>
        <begin position="646"/>
        <end position="666"/>
    </location>
</feature>
<feature type="transmembrane region" description="Helical" evidence="2">
    <location>
        <begin position="671"/>
        <end position="691"/>
    </location>
</feature>
<feature type="transmembrane region" description="Helical" evidence="2">
    <location>
        <begin position="756"/>
        <end position="776"/>
    </location>
</feature>
<feature type="transmembrane region" description="Helical" evidence="2">
    <location>
        <begin position="1187"/>
        <end position="1207"/>
    </location>
</feature>
<feature type="transmembrane region" description="Helical" evidence="2">
    <location>
        <begin position="1215"/>
        <end position="1235"/>
    </location>
</feature>
<feature type="transmembrane region" description="Helical" evidence="2">
    <location>
        <begin position="1275"/>
        <end position="1295"/>
    </location>
</feature>
<feature type="transmembrane region" description="Helical" evidence="2">
    <location>
        <begin position="1302"/>
        <end position="1322"/>
    </location>
</feature>
<feature type="transmembrane region" description="Helical" evidence="2">
    <location>
        <begin position="1332"/>
        <end position="1352"/>
    </location>
</feature>
<feature type="transmembrane region" description="Helical" evidence="2">
    <location>
        <begin position="1363"/>
        <end position="1383"/>
    </location>
</feature>
<feature type="transmembrane region" description="Helical" evidence="2">
    <location>
        <begin position="1413"/>
        <end position="1433"/>
    </location>
</feature>
<feature type="domain" description="ABC transporter 1" evidence="3">
    <location>
        <begin position="158"/>
        <end position="430"/>
    </location>
</feature>
<feature type="domain" description="ABC transmembrane type-2 1">
    <location>
        <begin position="508"/>
        <end position="721"/>
    </location>
</feature>
<feature type="domain" description="ABC transporter 2" evidence="3">
    <location>
        <begin position="843"/>
        <end position="1095"/>
    </location>
</feature>
<feature type="domain" description="ABC transmembrane type-2 2">
    <location>
        <begin position="1168"/>
        <end position="1382"/>
    </location>
</feature>
<feature type="binding site" evidence="3">
    <location>
        <begin position="191"/>
        <end position="198"/>
    </location>
    <ligand>
        <name>ATP</name>
        <dbReference type="ChEBI" id="CHEBI:30616"/>
        <label>1</label>
    </ligand>
</feature>
<feature type="binding site" evidence="3">
    <location>
        <begin position="888"/>
        <end position="895"/>
    </location>
    <ligand>
        <name>ATP</name>
        <dbReference type="ChEBI" id="CHEBI:30616"/>
        <label>2</label>
    </ligand>
</feature>
<reference key="1">
    <citation type="journal article" date="1996" name="J. Biol. Chem.">
        <title>Hormonal and environmental regulation of a plant PDR5-like ABC transporter.</title>
        <authorList>
            <person name="Smart C.C."/>
            <person name="Fleming A.J."/>
        </authorList>
    </citation>
    <scope>NUCLEOTIDE SEQUENCE [MRNA]</scope>
    <scope>FUNCTION</scope>
    <scope>TISSUE SPECIFICITY</scope>
    <scope>INDUCTION</scope>
</reference>
<reference key="2">
    <citation type="journal article" date="2002" name="Plant J.">
        <title>The ABC transporter SpTUR2 confers resistance to the antifungal diterpene sclareol.</title>
        <authorList>
            <person name="van den Brule S."/>
            <person name="Mueller A."/>
            <person name="Fleming A.J."/>
            <person name="Smart C.C."/>
        </authorList>
    </citation>
    <scope>FUNCTION</scope>
    <scope>SUBCELLULAR LOCATION</scope>
    <scope>INDUCTION</scope>
</reference>
<reference key="3">
    <citation type="journal article" date="2006" name="FEBS Lett.">
        <title>Organization and function of the plant pleiotropic drug resistance ABC transporter family.</title>
        <authorList>
            <person name="Crouzet J."/>
            <person name="Trombik T."/>
            <person name="Fraysse A.S."/>
            <person name="Boutry M."/>
        </authorList>
    </citation>
    <scope>GENE FAMILY</scope>
    <scope>NOMENCLATURE</scope>
</reference>
<comment type="function">
    <text evidence="1 4 5">May be a general defense protein (By similarity). Seems involved in turion (dormant buds) formation. Confers resistance to the diterpenoid antifungal agent sclareol.</text>
</comment>
<comment type="subcellular location">
    <subcellularLocation>
        <location evidence="4">Cell membrane</location>
        <topology evidence="4">Multi-pass membrane protein</topology>
    </subcellularLocation>
</comment>
<comment type="tissue specificity">
    <text evidence="5">Ubiquitous.</text>
</comment>
<comment type="induction">
    <text evidence="4 5">Induced by abiotic stresses such as cold-stress, cycloheximide and sodium chloride (NaCl). Induction by abscisic acid (ABA) is repressed by cytokinin such as kinetin (at protein level).</text>
</comment>
<comment type="similarity">
    <text evidence="6">Belongs to the ABC transporter superfamily. ABCG family. PDR (TC 3.A.1.205) subfamily.</text>
</comment>
<proteinExistence type="evidence at protein level"/>
<protein>
    <recommendedName>
        <fullName>Pleiotropic drug resistance protein TUR2</fullName>
        <shortName>Protein Turion 2</shortName>
    </recommendedName>
</protein>
<dbReference type="EMBL" id="Z70524">
    <property type="protein sequence ID" value="CAA94437.1"/>
    <property type="molecule type" value="mRNA"/>
</dbReference>
<dbReference type="SMR" id="O24367"/>
<dbReference type="TCDB" id="3.A.1.205.20">
    <property type="family name" value="the atp-binding cassette (abc) superfamily"/>
</dbReference>
<dbReference type="GO" id="GO:0005886">
    <property type="term" value="C:plasma membrane"/>
    <property type="evidence" value="ECO:0007669"/>
    <property type="project" value="UniProtKB-SubCell"/>
</dbReference>
<dbReference type="GO" id="GO:0140359">
    <property type="term" value="F:ABC-type transporter activity"/>
    <property type="evidence" value="ECO:0007669"/>
    <property type="project" value="InterPro"/>
</dbReference>
<dbReference type="GO" id="GO:0005524">
    <property type="term" value="F:ATP binding"/>
    <property type="evidence" value="ECO:0007669"/>
    <property type="project" value="UniProtKB-KW"/>
</dbReference>
<dbReference type="GO" id="GO:0016887">
    <property type="term" value="F:ATP hydrolysis activity"/>
    <property type="evidence" value="ECO:0007669"/>
    <property type="project" value="InterPro"/>
</dbReference>
<dbReference type="GO" id="GO:0006952">
    <property type="term" value="P:defense response"/>
    <property type="evidence" value="ECO:0007669"/>
    <property type="project" value="UniProtKB-KW"/>
</dbReference>
<dbReference type="CDD" id="cd03233">
    <property type="entry name" value="ABCG_PDR_domain1"/>
    <property type="match status" value="1"/>
</dbReference>
<dbReference type="CDD" id="cd03232">
    <property type="entry name" value="ABCG_PDR_domain2"/>
    <property type="match status" value="1"/>
</dbReference>
<dbReference type="FunFam" id="3.40.50.300:FF:000179">
    <property type="entry name" value="ABC transporter G family member 34"/>
    <property type="match status" value="1"/>
</dbReference>
<dbReference type="FunFam" id="3.40.50.300:FF:000059">
    <property type="entry name" value="ABC transporter G family member 40"/>
    <property type="match status" value="1"/>
</dbReference>
<dbReference type="Gene3D" id="3.40.50.300">
    <property type="entry name" value="P-loop containing nucleotide triphosphate hydrolases"/>
    <property type="match status" value="2"/>
</dbReference>
<dbReference type="InterPro" id="IPR003593">
    <property type="entry name" value="AAA+_ATPase"/>
</dbReference>
<dbReference type="InterPro" id="IPR013525">
    <property type="entry name" value="ABC2_TM"/>
</dbReference>
<dbReference type="InterPro" id="IPR029481">
    <property type="entry name" value="ABC_trans_N"/>
</dbReference>
<dbReference type="InterPro" id="IPR003439">
    <property type="entry name" value="ABC_transporter-like_ATP-bd"/>
</dbReference>
<dbReference type="InterPro" id="IPR043926">
    <property type="entry name" value="ABCG_dom"/>
</dbReference>
<dbReference type="InterPro" id="IPR034001">
    <property type="entry name" value="ABCG_PDR_1"/>
</dbReference>
<dbReference type="InterPro" id="IPR034003">
    <property type="entry name" value="ABCG_PDR_2"/>
</dbReference>
<dbReference type="InterPro" id="IPR027417">
    <property type="entry name" value="P-loop_NTPase"/>
</dbReference>
<dbReference type="InterPro" id="IPR013581">
    <property type="entry name" value="PDR_assoc"/>
</dbReference>
<dbReference type="PANTHER" id="PTHR48040:SF35">
    <property type="entry name" value="ABC TRANSPORTER G FAMILY MEMBER 39-LIKE"/>
    <property type="match status" value="1"/>
</dbReference>
<dbReference type="PANTHER" id="PTHR48040">
    <property type="entry name" value="PLEIOTROPIC DRUG RESISTANCE PROTEIN 1-LIKE ISOFORM X1"/>
    <property type="match status" value="1"/>
</dbReference>
<dbReference type="Pfam" id="PF01061">
    <property type="entry name" value="ABC2_membrane"/>
    <property type="match status" value="2"/>
</dbReference>
<dbReference type="Pfam" id="PF19055">
    <property type="entry name" value="ABC2_membrane_7"/>
    <property type="match status" value="1"/>
</dbReference>
<dbReference type="Pfam" id="PF00005">
    <property type="entry name" value="ABC_tran"/>
    <property type="match status" value="2"/>
</dbReference>
<dbReference type="Pfam" id="PF14510">
    <property type="entry name" value="ABC_trans_N"/>
    <property type="match status" value="1"/>
</dbReference>
<dbReference type="Pfam" id="PF08370">
    <property type="entry name" value="PDR_assoc"/>
    <property type="match status" value="1"/>
</dbReference>
<dbReference type="SMART" id="SM00382">
    <property type="entry name" value="AAA"/>
    <property type="match status" value="2"/>
</dbReference>
<dbReference type="SUPFAM" id="SSF52540">
    <property type="entry name" value="P-loop containing nucleoside triphosphate hydrolases"/>
    <property type="match status" value="2"/>
</dbReference>
<dbReference type="PROSITE" id="PS50893">
    <property type="entry name" value="ABC_TRANSPORTER_2"/>
    <property type="match status" value="2"/>
</dbReference>
<sequence>MEIAGYRGGSLRGSLQGSLRRSVSAWRSPSTSDVFGRSSREEDDEEALKWAALEKLPTYDRLRKGIMTGDGGEIQEVDIQGLGFQERKNLLEKLVRNAEEDNERFLLKLRNRMERVGIDNPTIEVRFEHLNINAEAFVGNRGVPTLVNFFVNKAIWILSALHLMPSGKRPISILHDVSGIIKPCRMTLLLGPPGAGKTTLLLALAGKLDNTLKVTGNVTYNGHGMHEFVPQRTSAYISQHDVHIGEMTVRETLAFSSRCQGVGTRYEMLTELSRREKEANIKPDPDVDVYMKAVAVEGQESVVTDYILKILGLDICADTMVGDGMIRGISGGQKKRVTTGEMLVGPSKALFMDEISTGLDSSTTFQIVNSLRQSVHILGGTALIALLQPAPETYDLFDDILLLSDGQIVYQGPRENVLEFFESMGFKCPERKGVADFLQEVTSRKDQQQYWVRENEPYRFVPVNEFSEAFKSFHVGAKLHEELSTPFDRSRNHPAALTTSKYGISKMELLKACIDREWLLMKRNSFVYIFKVVQLIVLALIAMTVFFRTKLPRNGLEDATIFFGAMFLGLVTHLFNGFAELAMSIAKLPVFYKQRDLLFYPPWAYALPTWILKIPISFVECGVWIAMTYYVIGFDPNVVRMFRHYLLLVLISQVASGLFRLLAAVGRDMVVADTFGAFAQLVLLVLGGFIIAREKIKKFWIWGYWSSPLMYAQNAIAVNEFLGHSWNKLVDATGQTLGERFLRNRGIFVDKNWYWIGVGALIGYMVLFNFLFILFLEWLDPLGKGQTTVSEEALQEKEANRTGANVELATRGSAATSDGGSVEIRKDGNRKKGMVLPFTPLSITFDNVKYSVDMPQEMKDRGVTEDKLLLLKGVSGAFRPGVLTALMGVSGRGKTTLMDVLAGRKTGGYIEGDIRISGYPKNQETFARISGYCEQNDIHSPHVTVYESLLYSAWLRLPAEVDEKQRKMFVDEVMDLVELNSLRGSLVGLPGVTGLSTEQRKRLTIAVELVANPSIIFMDEPTSGLDARAAAIVMRAVRNTVDTGRTVVCTIHQPSIDIFEAFDELFLMKRGGEEIYVGPLGRQSSHLIKYFESIDGVKKIKERYNPATWMLEVTTISQEEILGLNFAEVYRNSDLYKRNKDLIKELSTPPPGSKDLFFATQFSQSFVMQCLACLWKQHKSYWRNPSYTATRLFFTVVIALIFGTIFWDLGKKRSTSLDLINAMGSMYAAVLFIGIQNAQTVQPIVDVERTVFYREKAAGMYSALPYAYAQVLIEVPHILVQTLLYGLLVYSMIGFDWTAAKFLWYMFFMFFTFLYFTYYGMMAVAMTPNSDIAAIVAAAFYAIWNIFAGFIIPRPRIPIWWRWYYWACPVAWTLYGLVVSQFGEYTDTMSDVDETVKDFLRRFLGFRHDFLPVVGVMVVVFTVLFASIFAFSIKTLNFQRR</sequence>